<protein>
    <recommendedName>
        <fullName evidence="1">2-succinyl-5-enolpyruvyl-6-hydroxy-3-cyclohexene-1-carboxylate synthase</fullName>
        <shortName evidence="1">SEPHCHC synthase</shortName>
        <ecNumber evidence="1">2.2.1.9</ecNumber>
    </recommendedName>
    <alternativeName>
        <fullName evidence="1">Menaquinone biosynthesis protein MenD</fullName>
    </alternativeName>
</protein>
<organism>
    <name type="scientific">Escherichia coli O81 (strain ED1a)</name>
    <dbReference type="NCBI Taxonomy" id="585397"/>
    <lineage>
        <taxon>Bacteria</taxon>
        <taxon>Pseudomonadati</taxon>
        <taxon>Pseudomonadota</taxon>
        <taxon>Gammaproteobacteria</taxon>
        <taxon>Enterobacterales</taxon>
        <taxon>Enterobacteriaceae</taxon>
        <taxon>Escherichia</taxon>
    </lineage>
</organism>
<dbReference type="EC" id="2.2.1.9" evidence="1"/>
<dbReference type="EMBL" id="CU928162">
    <property type="protein sequence ID" value="CAR08763.1"/>
    <property type="molecule type" value="Genomic_DNA"/>
</dbReference>
<dbReference type="RefSeq" id="WP_000116370.1">
    <property type="nucleotide sequence ID" value="NC_011745.1"/>
</dbReference>
<dbReference type="SMR" id="B7MXE7"/>
<dbReference type="KEGG" id="ecq:ECED1_2732"/>
<dbReference type="HOGENOM" id="CLU_006051_3_0_6"/>
<dbReference type="UniPathway" id="UPA00079"/>
<dbReference type="UniPathway" id="UPA01057">
    <property type="reaction ID" value="UER00164"/>
</dbReference>
<dbReference type="Proteomes" id="UP000000748">
    <property type="component" value="Chromosome"/>
</dbReference>
<dbReference type="GO" id="GO:0070204">
    <property type="term" value="F:2-succinyl-5-enolpyruvyl-6-hydroxy-3-cyclohexene-1-carboxylic-acid synthase activity"/>
    <property type="evidence" value="ECO:0007669"/>
    <property type="project" value="UniProtKB-UniRule"/>
</dbReference>
<dbReference type="GO" id="GO:0000287">
    <property type="term" value="F:magnesium ion binding"/>
    <property type="evidence" value="ECO:0007669"/>
    <property type="project" value="UniProtKB-UniRule"/>
</dbReference>
<dbReference type="GO" id="GO:0030145">
    <property type="term" value="F:manganese ion binding"/>
    <property type="evidence" value="ECO:0007669"/>
    <property type="project" value="UniProtKB-UniRule"/>
</dbReference>
<dbReference type="GO" id="GO:0030976">
    <property type="term" value="F:thiamine pyrophosphate binding"/>
    <property type="evidence" value="ECO:0007669"/>
    <property type="project" value="UniProtKB-UniRule"/>
</dbReference>
<dbReference type="GO" id="GO:0009234">
    <property type="term" value="P:menaquinone biosynthetic process"/>
    <property type="evidence" value="ECO:0007669"/>
    <property type="project" value="UniProtKB-UniRule"/>
</dbReference>
<dbReference type="CDD" id="cd07037">
    <property type="entry name" value="TPP_PYR_MenD"/>
    <property type="match status" value="1"/>
</dbReference>
<dbReference type="CDD" id="cd02009">
    <property type="entry name" value="TPP_SHCHC_synthase"/>
    <property type="match status" value="1"/>
</dbReference>
<dbReference type="FunFam" id="3.40.50.1220:FF:000010">
    <property type="entry name" value="2-succinyl-5-enolpyruvyl-6-hydroxy-3-cyclohexene-1-carboxylate synthase"/>
    <property type="match status" value="1"/>
</dbReference>
<dbReference type="FunFam" id="3.40.50.970:FF:000029">
    <property type="entry name" value="2-succinyl-5-enolpyruvyl-6-hydroxy-3-cyclohexene-1-carboxylate synthase"/>
    <property type="match status" value="1"/>
</dbReference>
<dbReference type="Gene3D" id="3.40.50.970">
    <property type="match status" value="2"/>
</dbReference>
<dbReference type="Gene3D" id="3.40.50.1220">
    <property type="entry name" value="TPP-binding domain"/>
    <property type="match status" value="1"/>
</dbReference>
<dbReference type="HAMAP" id="MF_01659">
    <property type="entry name" value="MenD"/>
    <property type="match status" value="1"/>
</dbReference>
<dbReference type="InterPro" id="IPR004433">
    <property type="entry name" value="MenaQ_synth_MenD"/>
</dbReference>
<dbReference type="InterPro" id="IPR032264">
    <property type="entry name" value="MenD_middle"/>
</dbReference>
<dbReference type="InterPro" id="IPR029061">
    <property type="entry name" value="THDP-binding"/>
</dbReference>
<dbReference type="InterPro" id="IPR012001">
    <property type="entry name" value="Thiamin_PyroP_enz_TPP-bd_dom"/>
</dbReference>
<dbReference type="InterPro" id="IPR011766">
    <property type="entry name" value="TPP_enzyme_TPP-bd"/>
</dbReference>
<dbReference type="NCBIfam" id="TIGR00173">
    <property type="entry name" value="menD"/>
    <property type="match status" value="1"/>
</dbReference>
<dbReference type="PANTHER" id="PTHR42916">
    <property type="entry name" value="2-SUCCINYL-5-ENOLPYRUVYL-6-HYDROXY-3-CYCLOHEXENE-1-CARBOXYLATE SYNTHASE"/>
    <property type="match status" value="1"/>
</dbReference>
<dbReference type="PANTHER" id="PTHR42916:SF1">
    <property type="entry name" value="PROTEIN PHYLLO, CHLOROPLASTIC"/>
    <property type="match status" value="1"/>
</dbReference>
<dbReference type="Pfam" id="PF02775">
    <property type="entry name" value="TPP_enzyme_C"/>
    <property type="match status" value="1"/>
</dbReference>
<dbReference type="Pfam" id="PF16582">
    <property type="entry name" value="TPP_enzyme_M_2"/>
    <property type="match status" value="1"/>
</dbReference>
<dbReference type="Pfam" id="PF02776">
    <property type="entry name" value="TPP_enzyme_N"/>
    <property type="match status" value="1"/>
</dbReference>
<dbReference type="PIRSF" id="PIRSF004983">
    <property type="entry name" value="MenD"/>
    <property type="match status" value="1"/>
</dbReference>
<dbReference type="SUPFAM" id="SSF52518">
    <property type="entry name" value="Thiamin diphosphate-binding fold (THDP-binding)"/>
    <property type="match status" value="2"/>
</dbReference>
<sequence>MSVSAFNRRWAAVILEALTRHGVRHICIAPGSRSTPLTLAAAENSAFIHHTHFDERGLGHLALGLAKVSKQPVAVIVTSGTAVANLYPALIEAGLTGEKLILLTADRPPELIDCGANQAIRQPGMFASHPTHSISLPRPTQDIPARWLVSTIDHALGTLHAGGVHINCPFAEPLYGEMDDTGISWQQRLGDWWQDDKPWLREAPRRESEKQRDWFFWRQKRGVVVAGRMSAEEGKKVALWAQTLGWPLIGDVLSQTGQPLPCADLWLGNAKATSELQQAQIVVQLGSSLTGKRLLQWQASCEPEEYWIVDDIEGRLDPAHHRGRRLIANIADWLELHPAEKRQPWCVEIPRLAEQAMQAVIARRDAFGEAQLAHRISDYLPEQGQLFVGNSLVVRLIDALSQLPAGYPVYSNRGASGIDGLLSTAAGVQRASGKPTLAIVGDLSALYDLNALALLRQVSAPLVLIVVNNNGGQIFSLLPTPKSERERFYLMPQNVHFEHAAAMFELKYHRPQNWQELETTLVDAWRTPTTTVIEMVVNDTDGAQTLQQLLAQVSHL</sequence>
<reference key="1">
    <citation type="journal article" date="2009" name="PLoS Genet.">
        <title>Organised genome dynamics in the Escherichia coli species results in highly diverse adaptive paths.</title>
        <authorList>
            <person name="Touchon M."/>
            <person name="Hoede C."/>
            <person name="Tenaillon O."/>
            <person name="Barbe V."/>
            <person name="Baeriswyl S."/>
            <person name="Bidet P."/>
            <person name="Bingen E."/>
            <person name="Bonacorsi S."/>
            <person name="Bouchier C."/>
            <person name="Bouvet O."/>
            <person name="Calteau A."/>
            <person name="Chiapello H."/>
            <person name="Clermont O."/>
            <person name="Cruveiller S."/>
            <person name="Danchin A."/>
            <person name="Diard M."/>
            <person name="Dossat C."/>
            <person name="Karoui M.E."/>
            <person name="Frapy E."/>
            <person name="Garry L."/>
            <person name="Ghigo J.M."/>
            <person name="Gilles A.M."/>
            <person name="Johnson J."/>
            <person name="Le Bouguenec C."/>
            <person name="Lescat M."/>
            <person name="Mangenot S."/>
            <person name="Martinez-Jehanne V."/>
            <person name="Matic I."/>
            <person name="Nassif X."/>
            <person name="Oztas S."/>
            <person name="Petit M.A."/>
            <person name="Pichon C."/>
            <person name="Rouy Z."/>
            <person name="Ruf C.S."/>
            <person name="Schneider D."/>
            <person name="Tourret J."/>
            <person name="Vacherie B."/>
            <person name="Vallenet D."/>
            <person name="Medigue C."/>
            <person name="Rocha E.P.C."/>
            <person name="Denamur E."/>
        </authorList>
    </citation>
    <scope>NUCLEOTIDE SEQUENCE [LARGE SCALE GENOMIC DNA]</scope>
    <source>
        <strain>ED1a</strain>
    </source>
</reference>
<feature type="chain" id="PRO_1000187072" description="2-succinyl-5-enolpyruvyl-6-hydroxy-3-cyclohexene-1-carboxylate synthase">
    <location>
        <begin position="1"/>
        <end position="556"/>
    </location>
</feature>
<gene>
    <name evidence="1" type="primary">menD</name>
    <name type="ordered locus">ECED1_2732</name>
</gene>
<accession>B7MXE7</accession>
<keyword id="KW-0460">Magnesium</keyword>
<keyword id="KW-0464">Manganese</keyword>
<keyword id="KW-0474">Menaquinone biosynthesis</keyword>
<keyword id="KW-0479">Metal-binding</keyword>
<keyword id="KW-0786">Thiamine pyrophosphate</keyword>
<keyword id="KW-0808">Transferase</keyword>
<name>MEND_ECO81</name>
<proteinExistence type="inferred from homology"/>
<comment type="function">
    <text evidence="1">Catalyzes the thiamine diphosphate-dependent decarboxylation of 2-oxoglutarate and the subsequent addition of the resulting succinic semialdehyde-thiamine pyrophosphate anion to isochorismate to yield 2-succinyl-5-enolpyruvyl-6-hydroxy-3-cyclohexene-1-carboxylate (SEPHCHC).</text>
</comment>
<comment type="catalytic activity">
    <reaction evidence="1">
        <text>isochorismate + 2-oxoglutarate + H(+) = 5-enolpyruvoyl-6-hydroxy-2-succinyl-cyclohex-3-ene-1-carboxylate + CO2</text>
        <dbReference type="Rhea" id="RHEA:25593"/>
        <dbReference type="ChEBI" id="CHEBI:15378"/>
        <dbReference type="ChEBI" id="CHEBI:16526"/>
        <dbReference type="ChEBI" id="CHEBI:16810"/>
        <dbReference type="ChEBI" id="CHEBI:29780"/>
        <dbReference type="ChEBI" id="CHEBI:58818"/>
        <dbReference type="EC" id="2.2.1.9"/>
    </reaction>
</comment>
<comment type="cofactor">
    <cofactor evidence="1">
        <name>Mg(2+)</name>
        <dbReference type="ChEBI" id="CHEBI:18420"/>
    </cofactor>
    <cofactor evidence="1">
        <name>Mn(2+)</name>
        <dbReference type="ChEBI" id="CHEBI:29035"/>
    </cofactor>
</comment>
<comment type="cofactor">
    <cofactor evidence="1">
        <name>thiamine diphosphate</name>
        <dbReference type="ChEBI" id="CHEBI:58937"/>
    </cofactor>
    <text evidence="1">Binds 1 thiamine pyrophosphate per subunit.</text>
</comment>
<comment type="pathway">
    <text evidence="1">Quinol/quinone metabolism; 1,4-dihydroxy-2-naphthoate biosynthesis; 1,4-dihydroxy-2-naphthoate from chorismate: step 2/7.</text>
</comment>
<comment type="pathway">
    <text evidence="1">Quinol/quinone metabolism; menaquinone biosynthesis.</text>
</comment>
<comment type="subunit">
    <text evidence="1">Homodimer.</text>
</comment>
<comment type="similarity">
    <text evidence="1">Belongs to the TPP enzyme family. MenD subfamily.</text>
</comment>
<evidence type="ECO:0000255" key="1">
    <source>
        <dbReference type="HAMAP-Rule" id="MF_01659"/>
    </source>
</evidence>